<gene>
    <name evidence="1" type="primary">ndk</name>
    <name type="ordered locus">Oant_2594</name>
</gene>
<keyword id="KW-0067">ATP-binding</keyword>
<keyword id="KW-0963">Cytoplasm</keyword>
<keyword id="KW-0418">Kinase</keyword>
<keyword id="KW-0460">Magnesium</keyword>
<keyword id="KW-0479">Metal-binding</keyword>
<keyword id="KW-0546">Nucleotide metabolism</keyword>
<keyword id="KW-0547">Nucleotide-binding</keyword>
<keyword id="KW-0597">Phosphoprotein</keyword>
<keyword id="KW-1185">Reference proteome</keyword>
<keyword id="KW-0808">Transferase</keyword>
<comment type="function">
    <text evidence="1">Major role in the synthesis of nucleoside triphosphates other than ATP. The ATP gamma phosphate is transferred to the NDP beta phosphate via a ping-pong mechanism, using a phosphorylated active-site intermediate.</text>
</comment>
<comment type="catalytic activity">
    <reaction evidence="1">
        <text>a 2'-deoxyribonucleoside 5'-diphosphate + ATP = a 2'-deoxyribonucleoside 5'-triphosphate + ADP</text>
        <dbReference type="Rhea" id="RHEA:44640"/>
        <dbReference type="ChEBI" id="CHEBI:30616"/>
        <dbReference type="ChEBI" id="CHEBI:61560"/>
        <dbReference type="ChEBI" id="CHEBI:73316"/>
        <dbReference type="ChEBI" id="CHEBI:456216"/>
        <dbReference type="EC" id="2.7.4.6"/>
    </reaction>
</comment>
<comment type="catalytic activity">
    <reaction evidence="1">
        <text>a ribonucleoside 5'-diphosphate + ATP = a ribonucleoside 5'-triphosphate + ADP</text>
        <dbReference type="Rhea" id="RHEA:18113"/>
        <dbReference type="ChEBI" id="CHEBI:30616"/>
        <dbReference type="ChEBI" id="CHEBI:57930"/>
        <dbReference type="ChEBI" id="CHEBI:61557"/>
        <dbReference type="ChEBI" id="CHEBI:456216"/>
        <dbReference type="EC" id="2.7.4.6"/>
    </reaction>
</comment>
<comment type="cofactor">
    <cofactor evidence="1">
        <name>Mg(2+)</name>
        <dbReference type="ChEBI" id="CHEBI:18420"/>
    </cofactor>
</comment>
<comment type="subunit">
    <text evidence="1">Homotetramer.</text>
</comment>
<comment type="subcellular location">
    <subcellularLocation>
        <location evidence="1">Cytoplasm</location>
    </subcellularLocation>
</comment>
<comment type="similarity">
    <text evidence="1">Belongs to the NDK family.</text>
</comment>
<proteinExistence type="inferred from homology"/>
<sequence>MAIERTFSMIKPDATRRNLTGAITAKLEAAGLRVVASKRVWMSLREAEGFYAVHKDRPFFGELTEFMSSGPTIVQVLEGENAIAKNREVMGATNPANADEGTIRKEFALSIGENSVHGSDAPETAAEEIAYWFSGTEIVG</sequence>
<name>NDK_BRUA4</name>
<protein>
    <recommendedName>
        <fullName evidence="1">Nucleoside diphosphate kinase</fullName>
        <shortName evidence="1">NDK</shortName>
        <shortName evidence="1">NDP kinase</shortName>
        <ecNumber evidence="1">2.7.4.6</ecNumber>
    </recommendedName>
    <alternativeName>
        <fullName evidence="1">Nucleoside-2-P kinase</fullName>
    </alternativeName>
</protein>
<evidence type="ECO:0000255" key="1">
    <source>
        <dbReference type="HAMAP-Rule" id="MF_00451"/>
    </source>
</evidence>
<organism>
    <name type="scientific">Brucella anthropi (strain ATCC 49188 / DSM 6882 / CCUG 24695 / JCM 21032 / LMG 3331 / NBRC 15819 / NCTC 12168 / Alc 37)</name>
    <name type="common">Ochrobactrum anthropi</name>
    <dbReference type="NCBI Taxonomy" id="439375"/>
    <lineage>
        <taxon>Bacteria</taxon>
        <taxon>Pseudomonadati</taxon>
        <taxon>Pseudomonadota</taxon>
        <taxon>Alphaproteobacteria</taxon>
        <taxon>Hyphomicrobiales</taxon>
        <taxon>Brucellaceae</taxon>
        <taxon>Brucella/Ochrobactrum group</taxon>
        <taxon>Brucella</taxon>
    </lineage>
</organism>
<dbReference type="EC" id="2.7.4.6" evidence="1"/>
<dbReference type="EMBL" id="CP000758">
    <property type="protein sequence ID" value="ABS15307.1"/>
    <property type="molecule type" value="Genomic_DNA"/>
</dbReference>
<dbReference type="RefSeq" id="WP_010661674.1">
    <property type="nucleotide sequence ID" value="NC_009667.1"/>
</dbReference>
<dbReference type="SMR" id="A6X253"/>
<dbReference type="STRING" id="439375.Oant_2594"/>
<dbReference type="KEGG" id="oan:Oant_2594"/>
<dbReference type="eggNOG" id="COG0105">
    <property type="taxonomic scope" value="Bacteria"/>
</dbReference>
<dbReference type="HOGENOM" id="CLU_060216_8_1_5"/>
<dbReference type="PhylomeDB" id="A6X253"/>
<dbReference type="Proteomes" id="UP000002301">
    <property type="component" value="Chromosome 1"/>
</dbReference>
<dbReference type="GO" id="GO:0005737">
    <property type="term" value="C:cytoplasm"/>
    <property type="evidence" value="ECO:0007669"/>
    <property type="project" value="UniProtKB-SubCell"/>
</dbReference>
<dbReference type="GO" id="GO:0005524">
    <property type="term" value="F:ATP binding"/>
    <property type="evidence" value="ECO:0007669"/>
    <property type="project" value="UniProtKB-UniRule"/>
</dbReference>
<dbReference type="GO" id="GO:0046872">
    <property type="term" value="F:metal ion binding"/>
    <property type="evidence" value="ECO:0007669"/>
    <property type="project" value="UniProtKB-KW"/>
</dbReference>
<dbReference type="GO" id="GO:0004550">
    <property type="term" value="F:nucleoside diphosphate kinase activity"/>
    <property type="evidence" value="ECO:0007669"/>
    <property type="project" value="UniProtKB-UniRule"/>
</dbReference>
<dbReference type="GO" id="GO:0006241">
    <property type="term" value="P:CTP biosynthetic process"/>
    <property type="evidence" value="ECO:0007669"/>
    <property type="project" value="UniProtKB-UniRule"/>
</dbReference>
<dbReference type="GO" id="GO:0006183">
    <property type="term" value="P:GTP biosynthetic process"/>
    <property type="evidence" value="ECO:0007669"/>
    <property type="project" value="UniProtKB-UniRule"/>
</dbReference>
<dbReference type="GO" id="GO:0006228">
    <property type="term" value="P:UTP biosynthetic process"/>
    <property type="evidence" value="ECO:0007669"/>
    <property type="project" value="UniProtKB-UniRule"/>
</dbReference>
<dbReference type="CDD" id="cd04413">
    <property type="entry name" value="NDPk_I"/>
    <property type="match status" value="1"/>
</dbReference>
<dbReference type="FunFam" id="3.30.70.141:FF:000003">
    <property type="entry name" value="Nucleoside diphosphate kinase"/>
    <property type="match status" value="1"/>
</dbReference>
<dbReference type="Gene3D" id="3.30.70.141">
    <property type="entry name" value="Nucleoside diphosphate kinase-like domain"/>
    <property type="match status" value="1"/>
</dbReference>
<dbReference type="HAMAP" id="MF_00451">
    <property type="entry name" value="NDP_kinase"/>
    <property type="match status" value="1"/>
</dbReference>
<dbReference type="InterPro" id="IPR034907">
    <property type="entry name" value="NDK-like_dom"/>
</dbReference>
<dbReference type="InterPro" id="IPR036850">
    <property type="entry name" value="NDK-like_dom_sf"/>
</dbReference>
<dbReference type="InterPro" id="IPR001564">
    <property type="entry name" value="Nucleoside_diP_kinase"/>
</dbReference>
<dbReference type="InterPro" id="IPR023005">
    <property type="entry name" value="Nucleoside_diP_kinase_AS"/>
</dbReference>
<dbReference type="NCBIfam" id="NF001908">
    <property type="entry name" value="PRK00668.1"/>
    <property type="match status" value="1"/>
</dbReference>
<dbReference type="PANTHER" id="PTHR11349">
    <property type="entry name" value="NUCLEOSIDE DIPHOSPHATE KINASE"/>
    <property type="match status" value="1"/>
</dbReference>
<dbReference type="Pfam" id="PF00334">
    <property type="entry name" value="NDK"/>
    <property type="match status" value="1"/>
</dbReference>
<dbReference type="PRINTS" id="PR01243">
    <property type="entry name" value="NUCDPKINASE"/>
</dbReference>
<dbReference type="SMART" id="SM00562">
    <property type="entry name" value="NDK"/>
    <property type="match status" value="1"/>
</dbReference>
<dbReference type="SUPFAM" id="SSF54919">
    <property type="entry name" value="Nucleoside diphosphate kinase, NDK"/>
    <property type="match status" value="1"/>
</dbReference>
<dbReference type="PROSITE" id="PS00469">
    <property type="entry name" value="NDPK"/>
    <property type="match status" value="1"/>
</dbReference>
<dbReference type="PROSITE" id="PS51374">
    <property type="entry name" value="NDPK_LIKE"/>
    <property type="match status" value="1"/>
</dbReference>
<accession>A6X253</accession>
<feature type="chain" id="PRO_1000026262" description="Nucleoside diphosphate kinase">
    <location>
        <begin position="1"/>
        <end position="140"/>
    </location>
</feature>
<feature type="active site" description="Pros-phosphohistidine intermediate" evidence="1">
    <location>
        <position position="117"/>
    </location>
</feature>
<feature type="binding site" evidence="1">
    <location>
        <position position="11"/>
    </location>
    <ligand>
        <name>ATP</name>
        <dbReference type="ChEBI" id="CHEBI:30616"/>
    </ligand>
</feature>
<feature type="binding site" evidence="1">
    <location>
        <position position="59"/>
    </location>
    <ligand>
        <name>ATP</name>
        <dbReference type="ChEBI" id="CHEBI:30616"/>
    </ligand>
</feature>
<feature type="binding site" evidence="1">
    <location>
        <position position="87"/>
    </location>
    <ligand>
        <name>ATP</name>
        <dbReference type="ChEBI" id="CHEBI:30616"/>
    </ligand>
</feature>
<feature type="binding site" evidence="1">
    <location>
        <position position="93"/>
    </location>
    <ligand>
        <name>ATP</name>
        <dbReference type="ChEBI" id="CHEBI:30616"/>
    </ligand>
</feature>
<feature type="binding site" evidence="1">
    <location>
        <position position="104"/>
    </location>
    <ligand>
        <name>ATP</name>
        <dbReference type="ChEBI" id="CHEBI:30616"/>
    </ligand>
</feature>
<feature type="binding site" evidence="1">
    <location>
        <position position="114"/>
    </location>
    <ligand>
        <name>ATP</name>
        <dbReference type="ChEBI" id="CHEBI:30616"/>
    </ligand>
</feature>
<reference key="1">
    <citation type="journal article" date="2011" name="J. Bacteriol.">
        <title>Genome of Ochrobactrum anthropi ATCC 49188 T, a versatile opportunistic pathogen and symbiont of several eukaryotic hosts.</title>
        <authorList>
            <person name="Chain P.S."/>
            <person name="Lang D.M."/>
            <person name="Comerci D.J."/>
            <person name="Malfatti S.A."/>
            <person name="Vergez L.M."/>
            <person name="Shin M."/>
            <person name="Ugalde R.A."/>
            <person name="Garcia E."/>
            <person name="Tolmasky M.E."/>
        </authorList>
    </citation>
    <scope>NUCLEOTIDE SEQUENCE [LARGE SCALE GENOMIC DNA]</scope>
    <source>
        <strain>ATCC 49188 / DSM 6882 / CCUG 24695 / JCM 21032 / LMG 3331 / NBRC 15819 / NCTC 12168 / Alc 37</strain>
    </source>
</reference>